<accession>C5CC44</accession>
<sequence length="150" mass="15812">MADNDAIKVHDLRPAPGAKTAKTRVGRGEASKGKTAGRGTKGTKARYQVRAGFEGGQLPLQMRLPKLRGFKNPFRTEYQVVNLDKLSAHFPEGGEVTVDALVSKGLVRRGQPVKVLGTGEITAAVQVKANAFSASAVEKIQAAGGSTETL</sequence>
<evidence type="ECO:0000255" key="1">
    <source>
        <dbReference type="HAMAP-Rule" id="MF_01341"/>
    </source>
</evidence>
<evidence type="ECO:0000256" key="2">
    <source>
        <dbReference type="SAM" id="MobiDB-lite"/>
    </source>
</evidence>
<evidence type="ECO:0000305" key="3"/>
<organism>
    <name type="scientific">Micrococcus luteus (strain ATCC 4698 / DSM 20030 / JCM 1464 / CCM 169 / CCUG 5858 / IAM 1056 / NBRC 3333 / NCIMB 9278 / NCTC 2665 / VKM Ac-2230)</name>
    <name type="common">Micrococcus lysodeikticus</name>
    <dbReference type="NCBI Taxonomy" id="465515"/>
    <lineage>
        <taxon>Bacteria</taxon>
        <taxon>Bacillati</taxon>
        <taxon>Actinomycetota</taxon>
        <taxon>Actinomycetes</taxon>
        <taxon>Micrococcales</taxon>
        <taxon>Micrococcaceae</taxon>
        <taxon>Micrococcus</taxon>
    </lineage>
</organism>
<proteinExistence type="inferred from homology"/>
<comment type="function">
    <text evidence="1">Binds to the 23S rRNA.</text>
</comment>
<comment type="subunit">
    <text evidence="1">Part of the 50S ribosomal subunit.</text>
</comment>
<comment type="similarity">
    <text evidence="1">Belongs to the universal ribosomal protein uL15 family.</text>
</comment>
<protein>
    <recommendedName>
        <fullName evidence="1">Large ribosomal subunit protein uL15</fullName>
    </recommendedName>
    <alternativeName>
        <fullName evidence="3">50S ribosomal protein L15</fullName>
    </alternativeName>
</protein>
<feature type="chain" id="PRO_1000214711" description="Large ribosomal subunit protein uL15">
    <location>
        <begin position="1"/>
        <end position="150"/>
    </location>
</feature>
<feature type="region of interest" description="Disordered" evidence="2">
    <location>
        <begin position="1"/>
        <end position="44"/>
    </location>
</feature>
<feature type="compositionally biased region" description="Basic and acidic residues" evidence="2">
    <location>
        <begin position="1"/>
        <end position="13"/>
    </location>
</feature>
<gene>
    <name evidence="1" type="primary">rplO</name>
    <name type="ordered locus">Mlut_16980</name>
</gene>
<keyword id="KW-1185">Reference proteome</keyword>
<keyword id="KW-0687">Ribonucleoprotein</keyword>
<keyword id="KW-0689">Ribosomal protein</keyword>
<keyword id="KW-0694">RNA-binding</keyword>
<keyword id="KW-0699">rRNA-binding</keyword>
<reference key="1">
    <citation type="journal article" date="2010" name="J. Bacteriol.">
        <title>Genome sequence of the Fleming strain of Micrococcus luteus, a simple free-living actinobacterium.</title>
        <authorList>
            <person name="Young M."/>
            <person name="Artsatbanov V."/>
            <person name="Beller H.R."/>
            <person name="Chandra G."/>
            <person name="Chater K.F."/>
            <person name="Dover L.G."/>
            <person name="Goh E.B."/>
            <person name="Kahan T."/>
            <person name="Kaprelyants A.S."/>
            <person name="Kyrpides N."/>
            <person name="Lapidus A."/>
            <person name="Lowry S.R."/>
            <person name="Lykidis A."/>
            <person name="Mahillon J."/>
            <person name="Markowitz V."/>
            <person name="Mavromatis K."/>
            <person name="Mukamolova G.V."/>
            <person name="Oren A."/>
            <person name="Rokem J.S."/>
            <person name="Smith M.C."/>
            <person name="Young D.I."/>
            <person name="Greenblatt C.L."/>
        </authorList>
    </citation>
    <scope>NUCLEOTIDE SEQUENCE [LARGE SCALE GENOMIC DNA]</scope>
    <source>
        <strain>ATCC 4698 / DSM 20030 / JCM 1464 / CCM 169 / CCUG 5858 / IAM 1056 / NBRC 3333 / NCIMB 9278 / NCTC 2665 / VKM Ac-2230</strain>
    </source>
</reference>
<dbReference type="EMBL" id="CP001628">
    <property type="protein sequence ID" value="ACS31185.1"/>
    <property type="molecule type" value="Genomic_DNA"/>
</dbReference>
<dbReference type="RefSeq" id="WP_012751036.1">
    <property type="nucleotide sequence ID" value="NC_012803.1"/>
</dbReference>
<dbReference type="SMR" id="C5CC44"/>
<dbReference type="STRING" id="465515.Mlut_16980"/>
<dbReference type="EnsemblBacteria" id="ACS31185">
    <property type="protein sequence ID" value="ACS31185"/>
    <property type="gene ID" value="Mlut_16980"/>
</dbReference>
<dbReference type="GeneID" id="93343565"/>
<dbReference type="KEGG" id="mlu:Mlut_16980"/>
<dbReference type="eggNOG" id="COG0200">
    <property type="taxonomic scope" value="Bacteria"/>
</dbReference>
<dbReference type="HOGENOM" id="CLU_055188_4_1_11"/>
<dbReference type="Proteomes" id="UP000000738">
    <property type="component" value="Chromosome"/>
</dbReference>
<dbReference type="GO" id="GO:0022625">
    <property type="term" value="C:cytosolic large ribosomal subunit"/>
    <property type="evidence" value="ECO:0007669"/>
    <property type="project" value="TreeGrafter"/>
</dbReference>
<dbReference type="GO" id="GO:0019843">
    <property type="term" value="F:rRNA binding"/>
    <property type="evidence" value="ECO:0007669"/>
    <property type="project" value="UniProtKB-UniRule"/>
</dbReference>
<dbReference type="GO" id="GO:0003735">
    <property type="term" value="F:structural constituent of ribosome"/>
    <property type="evidence" value="ECO:0007669"/>
    <property type="project" value="InterPro"/>
</dbReference>
<dbReference type="GO" id="GO:0006412">
    <property type="term" value="P:translation"/>
    <property type="evidence" value="ECO:0007669"/>
    <property type="project" value="UniProtKB-UniRule"/>
</dbReference>
<dbReference type="FunFam" id="3.100.10.10:FF:000005">
    <property type="entry name" value="50S ribosomal protein L15"/>
    <property type="match status" value="1"/>
</dbReference>
<dbReference type="Gene3D" id="3.100.10.10">
    <property type="match status" value="1"/>
</dbReference>
<dbReference type="HAMAP" id="MF_01341">
    <property type="entry name" value="Ribosomal_uL15"/>
    <property type="match status" value="1"/>
</dbReference>
<dbReference type="InterPro" id="IPR030878">
    <property type="entry name" value="Ribosomal_uL15"/>
</dbReference>
<dbReference type="InterPro" id="IPR021131">
    <property type="entry name" value="Ribosomal_uL15/eL18"/>
</dbReference>
<dbReference type="InterPro" id="IPR036227">
    <property type="entry name" value="Ribosomal_uL15/eL18_sf"/>
</dbReference>
<dbReference type="InterPro" id="IPR005749">
    <property type="entry name" value="Ribosomal_uL15_bac-type"/>
</dbReference>
<dbReference type="InterPro" id="IPR001196">
    <property type="entry name" value="Ribosomal_uL15_CS"/>
</dbReference>
<dbReference type="NCBIfam" id="TIGR01071">
    <property type="entry name" value="rplO_bact"/>
    <property type="match status" value="1"/>
</dbReference>
<dbReference type="PANTHER" id="PTHR12934">
    <property type="entry name" value="50S RIBOSOMAL PROTEIN L15"/>
    <property type="match status" value="1"/>
</dbReference>
<dbReference type="PANTHER" id="PTHR12934:SF11">
    <property type="entry name" value="LARGE RIBOSOMAL SUBUNIT PROTEIN UL15M"/>
    <property type="match status" value="1"/>
</dbReference>
<dbReference type="Pfam" id="PF00828">
    <property type="entry name" value="Ribosomal_L27A"/>
    <property type="match status" value="1"/>
</dbReference>
<dbReference type="SUPFAM" id="SSF52080">
    <property type="entry name" value="Ribosomal proteins L15p and L18e"/>
    <property type="match status" value="1"/>
</dbReference>
<dbReference type="PROSITE" id="PS00475">
    <property type="entry name" value="RIBOSOMAL_L15"/>
    <property type="match status" value="1"/>
</dbReference>
<name>RL15_MICLC</name>